<keyword id="KW-0131">Cell cycle</keyword>
<keyword id="KW-0132">Cell division</keyword>
<keyword id="KW-0195">Cyclin</keyword>
<keyword id="KW-0597">Phosphoprotein</keyword>
<keyword id="KW-1185">Reference proteome</keyword>
<comment type="function">
    <text>Unknown. Probably involved in G1-S cell cycle transition.</text>
</comment>
<comment type="subunit">
    <text evidence="3">Binds to CDK3, CDK5 and ABL1. The C-terminal cyclin-box-like region binds to CDK5.</text>
</comment>
<comment type="tissue specificity">
    <text evidence="3">Widely expressed.</text>
</comment>
<comment type="similarity">
    <text evidence="4">Belongs to the cyclin family.</text>
</comment>
<comment type="sequence caution" evidence="4">
    <conflict type="erroneous initiation">
        <sequence resource="EMBL-CDS" id="AAL12171"/>
    </conflict>
    <text>Extended N-terminus.</text>
</comment>
<sequence>MAAAAAGGAPGPAPGPSRPAPAARNPPAVPRRRGDSRRRQAALFFLNNISLDGRPPSLGPGGEKPAPPPPPPTEAREAPAPPPAPPGGLPGLPARPAPQGLLSPTTAPAGLGLDGQRQRRRVTSQRCSLEFLEDTVGCASVQRTKHASGSPRHKGLKKTHFIKNMRQYDTKNSRIVLICAKRSLCAAFSVLPYGEGLRISDLRVDSQKQRHPSGGVSVSSEMVFELEGVELGADGKVVSYAKFLYPTNALVIHKNDSHGLLPQPRPSIPRAPPGSRHKPVPTKSTPAGTELGSDGGDAVEYNPNLLDDPQWPCGKHKRVLIFASYMTTVIEYVKPADLKKDMNETFREKFPHIKLTLSKIRSLKREMRNLSEECSLEPVTVSMAYVYFEKLVLQGKLNKQNRKLCAGACVLLAAKISSDLRKSEVKQLIDKLEERFRFNRKDLIGFEFTVLVALELALYLPENQVLPHYRRLTQQF</sequence>
<gene>
    <name type="primary">Cables2</name>
</gene>
<proteinExistence type="evidence at protein level"/>
<protein>
    <recommendedName>
        <fullName>CDK5 and ABL1 enzyme substrate 2</fullName>
    </recommendedName>
    <alternativeName>
        <fullName>Interactor with CDK3 2</fullName>
        <shortName>Ik3-2</shortName>
    </alternativeName>
</protein>
<feature type="chain" id="PRO_0000080513" description="CDK5 and ABL1 enzyme substrate 2">
    <location>
        <begin position="1"/>
        <end position="476"/>
    </location>
</feature>
<feature type="region of interest" description="Disordered" evidence="2">
    <location>
        <begin position="1"/>
        <end position="119"/>
    </location>
</feature>
<feature type="region of interest" description="Disordered" evidence="2">
    <location>
        <begin position="256"/>
        <end position="295"/>
    </location>
</feature>
<feature type="compositionally biased region" description="Basic residues" evidence="2">
    <location>
        <begin position="30"/>
        <end position="40"/>
    </location>
</feature>
<feature type="compositionally biased region" description="Pro residues" evidence="2">
    <location>
        <begin position="65"/>
        <end position="96"/>
    </location>
</feature>
<feature type="compositionally biased region" description="Pro residues" evidence="2">
    <location>
        <begin position="263"/>
        <end position="272"/>
    </location>
</feature>
<feature type="modified residue" description="Phosphoserine" evidence="1">
    <location>
        <position position="128"/>
    </location>
</feature>
<feature type="modified residue" description="Phosphoserine" evidence="1">
    <location>
        <position position="206"/>
    </location>
</feature>
<evidence type="ECO:0000250" key="1">
    <source>
        <dbReference type="UniProtKB" id="Q9BTV7"/>
    </source>
</evidence>
<evidence type="ECO:0000256" key="2">
    <source>
        <dbReference type="SAM" id="MobiDB-lite"/>
    </source>
</evidence>
<evidence type="ECO:0000269" key="3">
    <source>
    </source>
</evidence>
<evidence type="ECO:0000305" key="4"/>
<name>CABL2_MOUSE</name>
<dbReference type="EMBL" id="AY049712">
    <property type="protein sequence ID" value="AAL12171.1"/>
    <property type="status" value="ALT_INIT"/>
    <property type="molecule type" value="mRNA"/>
</dbReference>
<dbReference type="EMBL" id="AL663027">
    <property type="status" value="NOT_ANNOTATED_CDS"/>
    <property type="molecule type" value="Genomic_DNA"/>
</dbReference>
<dbReference type="CCDS" id="CCDS38377.1"/>
<dbReference type="RefSeq" id="NP_665850.2">
    <property type="nucleotide sequence ID" value="NM_145851.2"/>
</dbReference>
<dbReference type="SMR" id="Q8K3M5"/>
<dbReference type="BioGRID" id="232982">
    <property type="interactions" value="4"/>
</dbReference>
<dbReference type="FunCoup" id="Q8K3M5">
    <property type="interactions" value="344"/>
</dbReference>
<dbReference type="IntAct" id="Q8K3M5">
    <property type="interactions" value="1"/>
</dbReference>
<dbReference type="MINT" id="Q8K3M5"/>
<dbReference type="STRING" id="10090.ENSMUSP00000104519"/>
<dbReference type="GlyGen" id="Q8K3M5">
    <property type="glycosylation" value="1 site"/>
</dbReference>
<dbReference type="iPTMnet" id="Q8K3M5"/>
<dbReference type="PhosphoSitePlus" id="Q8K3M5"/>
<dbReference type="PaxDb" id="10090-ENSMUSP00000104519"/>
<dbReference type="ProteomicsDB" id="273571"/>
<dbReference type="Antibodypedia" id="29526">
    <property type="antibodies" value="110 antibodies from 22 providers"/>
</dbReference>
<dbReference type="DNASU" id="252966"/>
<dbReference type="Ensembl" id="ENSMUST00000108891.2">
    <property type="protein sequence ID" value="ENSMUSP00000104519.2"/>
    <property type="gene ID" value="ENSMUSG00000038990.15"/>
</dbReference>
<dbReference type="GeneID" id="252966"/>
<dbReference type="KEGG" id="mmu:252966"/>
<dbReference type="UCSC" id="uc008oit.1">
    <property type="organism name" value="mouse"/>
</dbReference>
<dbReference type="AGR" id="MGI:2182335"/>
<dbReference type="CTD" id="81928"/>
<dbReference type="MGI" id="MGI:2182335">
    <property type="gene designation" value="Cables2"/>
</dbReference>
<dbReference type="VEuPathDB" id="HostDB:ENSMUSG00000038990"/>
<dbReference type="eggNOG" id="KOG4164">
    <property type="taxonomic scope" value="Eukaryota"/>
</dbReference>
<dbReference type="GeneTree" id="ENSGT00400000022086"/>
<dbReference type="HOGENOM" id="CLU_021942_2_1_1"/>
<dbReference type="InParanoid" id="Q8K3M5"/>
<dbReference type="OMA" id="CRTKHIS"/>
<dbReference type="OrthoDB" id="5353095at2759"/>
<dbReference type="PhylomeDB" id="Q8K3M5"/>
<dbReference type="TreeFam" id="TF323936"/>
<dbReference type="BioGRID-ORCS" id="252966">
    <property type="hits" value="3 hits in 80 CRISPR screens"/>
</dbReference>
<dbReference type="ChiTaRS" id="Cables2">
    <property type="organism name" value="mouse"/>
</dbReference>
<dbReference type="PRO" id="PR:Q8K3M5"/>
<dbReference type="Proteomes" id="UP000000589">
    <property type="component" value="Chromosome 2"/>
</dbReference>
<dbReference type="RNAct" id="Q8K3M5">
    <property type="molecule type" value="protein"/>
</dbReference>
<dbReference type="Bgee" id="ENSMUSG00000038990">
    <property type="expression patterns" value="Expressed in granulocyte and 71 other cell types or tissues"/>
</dbReference>
<dbReference type="GO" id="GO:0051301">
    <property type="term" value="P:cell division"/>
    <property type="evidence" value="ECO:0007669"/>
    <property type="project" value="UniProtKB-KW"/>
</dbReference>
<dbReference type="GO" id="GO:0051726">
    <property type="term" value="P:regulation of cell cycle"/>
    <property type="evidence" value="ECO:0007669"/>
    <property type="project" value="InterPro"/>
</dbReference>
<dbReference type="CDD" id="cd20603">
    <property type="entry name" value="CYCLIN_CABLES2"/>
    <property type="match status" value="1"/>
</dbReference>
<dbReference type="FunFam" id="1.10.472.10:FF:000020">
    <property type="entry name" value="CDK5 and ABL1 enzyme substrate 1"/>
    <property type="match status" value="1"/>
</dbReference>
<dbReference type="Gene3D" id="1.10.472.10">
    <property type="entry name" value="Cyclin-like"/>
    <property type="match status" value="1"/>
</dbReference>
<dbReference type="InterPro" id="IPR012388">
    <property type="entry name" value="CABLES1/2"/>
</dbReference>
<dbReference type="InterPro" id="IPR036915">
    <property type="entry name" value="Cyclin-like_sf"/>
</dbReference>
<dbReference type="InterPro" id="IPR006671">
    <property type="entry name" value="Cyclin_N"/>
</dbReference>
<dbReference type="PANTHER" id="PTHR22896">
    <property type="entry name" value="CDK5 AND ABL1 ENZYME SUBSTRATE 1"/>
    <property type="match status" value="1"/>
</dbReference>
<dbReference type="PANTHER" id="PTHR22896:SF3">
    <property type="entry name" value="CDK5 AND ABL1 ENZYME SUBSTRATE 2"/>
    <property type="match status" value="1"/>
</dbReference>
<dbReference type="Pfam" id="PF00134">
    <property type="entry name" value="Cyclin_N"/>
    <property type="match status" value="1"/>
</dbReference>
<dbReference type="PIRSF" id="PIRSF025798">
    <property type="entry name" value="Cables"/>
    <property type="match status" value="1"/>
</dbReference>
<dbReference type="SUPFAM" id="SSF47954">
    <property type="entry name" value="Cyclin-like"/>
    <property type="match status" value="1"/>
</dbReference>
<organism>
    <name type="scientific">Mus musculus</name>
    <name type="common">Mouse</name>
    <dbReference type="NCBI Taxonomy" id="10090"/>
    <lineage>
        <taxon>Eukaryota</taxon>
        <taxon>Metazoa</taxon>
        <taxon>Chordata</taxon>
        <taxon>Craniata</taxon>
        <taxon>Vertebrata</taxon>
        <taxon>Euteleostomi</taxon>
        <taxon>Mammalia</taxon>
        <taxon>Eutheria</taxon>
        <taxon>Euarchontoglires</taxon>
        <taxon>Glires</taxon>
        <taxon>Rodentia</taxon>
        <taxon>Myomorpha</taxon>
        <taxon>Muroidea</taxon>
        <taxon>Muridae</taxon>
        <taxon>Murinae</taxon>
        <taxon>Mus</taxon>
        <taxon>Mus</taxon>
    </lineage>
</organism>
<accession>Q8K3M5</accession>
<accession>A2ABW9</accession>
<reference key="1">
    <citation type="journal article" date="2002" name="Biochim. Biophys. Acta">
        <title>Ik3-2, a relative to ik3-1/cables, is associated with cdk3, cdk5, and c-abl.</title>
        <authorList>
            <person name="Sato H."/>
            <person name="Nishimoto I."/>
            <person name="Matsuoka M."/>
        </authorList>
    </citation>
    <scope>NUCLEOTIDE SEQUENCE [MRNA]</scope>
    <scope>INTERACTION WITH ABL1; CDK3 AND CDK5</scope>
    <scope>TISSUE SPECIFICITY</scope>
    <source>
        <tissue>Liver</tissue>
        <tissue>Spleen</tissue>
    </source>
</reference>
<reference key="2">
    <citation type="journal article" date="2009" name="PLoS Biol.">
        <title>Lineage-specific biology revealed by a finished genome assembly of the mouse.</title>
        <authorList>
            <person name="Church D.M."/>
            <person name="Goodstadt L."/>
            <person name="Hillier L.W."/>
            <person name="Zody M.C."/>
            <person name="Goldstein S."/>
            <person name="She X."/>
            <person name="Bult C.J."/>
            <person name="Agarwala R."/>
            <person name="Cherry J.L."/>
            <person name="DiCuccio M."/>
            <person name="Hlavina W."/>
            <person name="Kapustin Y."/>
            <person name="Meric P."/>
            <person name="Maglott D."/>
            <person name="Birtle Z."/>
            <person name="Marques A.C."/>
            <person name="Graves T."/>
            <person name="Zhou S."/>
            <person name="Teague B."/>
            <person name="Potamousis K."/>
            <person name="Churas C."/>
            <person name="Place M."/>
            <person name="Herschleb J."/>
            <person name="Runnheim R."/>
            <person name="Forrest D."/>
            <person name="Amos-Landgraf J."/>
            <person name="Schwartz D.C."/>
            <person name="Cheng Z."/>
            <person name="Lindblad-Toh K."/>
            <person name="Eichler E.E."/>
            <person name="Ponting C.P."/>
        </authorList>
    </citation>
    <scope>NUCLEOTIDE SEQUENCE [LARGE SCALE GENOMIC DNA]</scope>
    <source>
        <strain>C57BL/6J</strain>
    </source>
</reference>